<accession>Q3BRN6</accession>
<gene>
    <name evidence="1" type="primary">nuoH</name>
    <name type="synonym">nqo8</name>
    <name type="ordered locus">XCV2846</name>
</gene>
<sequence length="363" mass="40463">MNELLLNLVDPLHQWFLGLGDGGVVLWSVLKILLIAVPVIVAVAFYVVWERKLIGWMHVRHGPMYVGMGIFQAFADVFKLLFKEIVQPTSSHKAMFVIAPLLTLAPAFAAWSVVPFDAKLVLSNANVGLLYLLAMTSLGVYGIILAGWASNSKYAFLGAMRSAAQVVSYEIAMGFALVGVMIASGSVNLSQIVFAQAGNSGFFDWFLIPLFPLFIVYWVSGVAETNRAPFDVVEGESEIVAGHMVEYSGGAFALFFLAEYANMILVSFLISIFFLGGWLSPIQGWVNADVSPWIDWLWKGGWPWLLMKVFFFASAYIWFRASFPRYRYDQIMRLGWKVFIPLTIVWIAVTALMVFYGVIQKGV</sequence>
<reference key="1">
    <citation type="journal article" date="2005" name="J. Bacteriol.">
        <title>Insights into genome plasticity and pathogenicity of the plant pathogenic Bacterium Xanthomonas campestris pv. vesicatoria revealed by the complete genome sequence.</title>
        <authorList>
            <person name="Thieme F."/>
            <person name="Koebnik R."/>
            <person name="Bekel T."/>
            <person name="Berger C."/>
            <person name="Boch J."/>
            <person name="Buettner D."/>
            <person name="Caldana C."/>
            <person name="Gaigalat L."/>
            <person name="Goesmann A."/>
            <person name="Kay S."/>
            <person name="Kirchner O."/>
            <person name="Lanz C."/>
            <person name="Linke B."/>
            <person name="McHardy A.C."/>
            <person name="Meyer F."/>
            <person name="Mittenhuber G."/>
            <person name="Nies D.H."/>
            <person name="Niesbach-Kloesgen U."/>
            <person name="Patschkowski T."/>
            <person name="Rueckert C."/>
            <person name="Rupp O."/>
            <person name="Schneiker S."/>
            <person name="Schuster S.C."/>
            <person name="Vorhoelter F.J."/>
            <person name="Weber E."/>
            <person name="Puehler A."/>
            <person name="Bonas U."/>
            <person name="Bartels D."/>
            <person name="Kaiser O."/>
        </authorList>
    </citation>
    <scope>NUCLEOTIDE SEQUENCE [LARGE SCALE GENOMIC DNA]</scope>
    <source>
        <strain>85-10</strain>
    </source>
</reference>
<keyword id="KW-0997">Cell inner membrane</keyword>
<keyword id="KW-1003">Cell membrane</keyword>
<keyword id="KW-0472">Membrane</keyword>
<keyword id="KW-0520">NAD</keyword>
<keyword id="KW-0874">Quinone</keyword>
<keyword id="KW-1278">Translocase</keyword>
<keyword id="KW-0812">Transmembrane</keyword>
<keyword id="KW-1133">Transmembrane helix</keyword>
<keyword id="KW-0830">Ubiquinone</keyword>
<evidence type="ECO:0000255" key="1">
    <source>
        <dbReference type="HAMAP-Rule" id="MF_01350"/>
    </source>
</evidence>
<feature type="chain" id="PRO_0000244963" description="NADH-quinone oxidoreductase subunit H">
    <location>
        <begin position="1"/>
        <end position="363"/>
    </location>
</feature>
<feature type="transmembrane region" description="Helical" evidence="1">
    <location>
        <begin position="29"/>
        <end position="49"/>
    </location>
</feature>
<feature type="transmembrane region" description="Helical" evidence="1">
    <location>
        <begin position="62"/>
        <end position="82"/>
    </location>
</feature>
<feature type="transmembrane region" description="Helical" evidence="1">
    <location>
        <begin position="96"/>
        <end position="116"/>
    </location>
</feature>
<feature type="transmembrane region" description="Helical" evidence="1">
    <location>
        <begin position="127"/>
        <end position="147"/>
    </location>
</feature>
<feature type="transmembrane region" description="Helical" evidence="1">
    <location>
        <begin position="163"/>
        <end position="183"/>
    </location>
</feature>
<feature type="transmembrane region" description="Helical" evidence="1">
    <location>
        <begin position="202"/>
        <end position="222"/>
    </location>
</feature>
<feature type="transmembrane region" description="Helical" evidence="1">
    <location>
        <begin position="238"/>
        <end position="257"/>
    </location>
</feature>
<feature type="transmembrane region" description="Helical" evidence="1">
    <location>
        <begin position="264"/>
        <end position="286"/>
    </location>
</feature>
<feature type="transmembrane region" description="Helical" evidence="1">
    <location>
        <begin position="299"/>
        <end position="319"/>
    </location>
</feature>
<feature type="transmembrane region" description="Helical" evidence="1">
    <location>
        <begin position="339"/>
        <end position="359"/>
    </location>
</feature>
<organism>
    <name type="scientific">Xanthomonas euvesicatoria pv. vesicatoria (strain 85-10)</name>
    <name type="common">Xanthomonas campestris pv. vesicatoria</name>
    <dbReference type="NCBI Taxonomy" id="316273"/>
    <lineage>
        <taxon>Bacteria</taxon>
        <taxon>Pseudomonadati</taxon>
        <taxon>Pseudomonadota</taxon>
        <taxon>Gammaproteobacteria</taxon>
        <taxon>Lysobacterales</taxon>
        <taxon>Lysobacteraceae</taxon>
        <taxon>Xanthomonas</taxon>
    </lineage>
</organism>
<comment type="function">
    <text evidence="1">NDH-1 shuttles electrons from NADH, via FMN and iron-sulfur (Fe-S) centers, to quinones in the respiratory chain. The immediate electron acceptor for the enzyme in this species is believed to be ubiquinone. Couples the redox reaction to proton translocation (for every two electrons transferred, four hydrogen ions are translocated across the cytoplasmic membrane), and thus conserves the redox energy in a proton gradient. This subunit may bind ubiquinone.</text>
</comment>
<comment type="catalytic activity">
    <reaction evidence="1">
        <text>a quinone + NADH + 5 H(+)(in) = a quinol + NAD(+) + 4 H(+)(out)</text>
        <dbReference type="Rhea" id="RHEA:57888"/>
        <dbReference type="ChEBI" id="CHEBI:15378"/>
        <dbReference type="ChEBI" id="CHEBI:24646"/>
        <dbReference type="ChEBI" id="CHEBI:57540"/>
        <dbReference type="ChEBI" id="CHEBI:57945"/>
        <dbReference type="ChEBI" id="CHEBI:132124"/>
    </reaction>
</comment>
<comment type="subunit">
    <text evidence="1">NDH-1 is composed of 14 different subunits. Subunits NuoA, H, J, K, L, M, N constitute the membrane sector of the complex.</text>
</comment>
<comment type="subcellular location">
    <subcellularLocation>
        <location evidence="1">Cell inner membrane</location>
        <topology evidence="1">Multi-pass membrane protein</topology>
    </subcellularLocation>
</comment>
<comment type="similarity">
    <text evidence="1">Belongs to the complex I subunit 1 family.</text>
</comment>
<protein>
    <recommendedName>
        <fullName evidence="1">NADH-quinone oxidoreductase subunit H</fullName>
        <ecNumber evidence="1">7.1.1.-</ecNumber>
    </recommendedName>
    <alternativeName>
        <fullName evidence="1">NADH dehydrogenase I subunit H</fullName>
    </alternativeName>
    <alternativeName>
        <fullName evidence="1">NDH-1 subunit H</fullName>
    </alternativeName>
</protein>
<name>NUOH_XANE5</name>
<dbReference type="EC" id="7.1.1.-" evidence="1"/>
<dbReference type="EMBL" id="AM039952">
    <property type="protein sequence ID" value="CAJ24525.1"/>
    <property type="molecule type" value="Genomic_DNA"/>
</dbReference>
<dbReference type="RefSeq" id="WP_008570972.1">
    <property type="nucleotide sequence ID" value="NZ_CP017190.1"/>
</dbReference>
<dbReference type="SMR" id="Q3BRN6"/>
<dbReference type="STRING" id="456327.BJD11_08640"/>
<dbReference type="GeneID" id="97510984"/>
<dbReference type="KEGG" id="xcv:XCV2846"/>
<dbReference type="eggNOG" id="COG1005">
    <property type="taxonomic scope" value="Bacteria"/>
</dbReference>
<dbReference type="HOGENOM" id="CLU_015134_0_1_6"/>
<dbReference type="Proteomes" id="UP000007069">
    <property type="component" value="Chromosome"/>
</dbReference>
<dbReference type="GO" id="GO:0005886">
    <property type="term" value="C:plasma membrane"/>
    <property type="evidence" value="ECO:0007669"/>
    <property type="project" value="UniProtKB-SubCell"/>
</dbReference>
<dbReference type="GO" id="GO:0003954">
    <property type="term" value="F:NADH dehydrogenase activity"/>
    <property type="evidence" value="ECO:0007669"/>
    <property type="project" value="TreeGrafter"/>
</dbReference>
<dbReference type="GO" id="GO:0016655">
    <property type="term" value="F:oxidoreductase activity, acting on NAD(P)H, quinone or similar compound as acceptor"/>
    <property type="evidence" value="ECO:0007669"/>
    <property type="project" value="UniProtKB-UniRule"/>
</dbReference>
<dbReference type="GO" id="GO:0048038">
    <property type="term" value="F:quinone binding"/>
    <property type="evidence" value="ECO:0007669"/>
    <property type="project" value="UniProtKB-KW"/>
</dbReference>
<dbReference type="GO" id="GO:0009060">
    <property type="term" value="P:aerobic respiration"/>
    <property type="evidence" value="ECO:0007669"/>
    <property type="project" value="TreeGrafter"/>
</dbReference>
<dbReference type="HAMAP" id="MF_01350">
    <property type="entry name" value="NDH1_NuoH"/>
    <property type="match status" value="1"/>
</dbReference>
<dbReference type="InterPro" id="IPR001694">
    <property type="entry name" value="NADH_UbQ_OxRdtase_su1/FPO"/>
</dbReference>
<dbReference type="InterPro" id="IPR018086">
    <property type="entry name" value="NADH_UbQ_OxRdtase_su1_CS"/>
</dbReference>
<dbReference type="NCBIfam" id="NF004741">
    <property type="entry name" value="PRK06076.1-2"/>
    <property type="match status" value="1"/>
</dbReference>
<dbReference type="NCBIfam" id="NF004742">
    <property type="entry name" value="PRK06076.1-3"/>
    <property type="match status" value="1"/>
</dbReference>
<dbReference type="PANTHER" id="PTHR11432">
    <property type="entry name" value="NADH DEHYDROGENASE SUBUNIT 1"/>
    <property type="match status" value="1"/>
</dbReference>
<dbReference type="PANTHER" id="PTHR11432:SF3">
    <property type="entry name" value="NADH-UBIQUINONE OXIDOREDUCTASE CHAIN 1"/>
    <property type="match status" value="1"/>
</dbReference>
<dbReference type="Pfam" id="PF00146">
    <property type="entry name" value="NADHdh"/>
    <property type="match status" value="1"/>
</dbReference>
<dbReference type="PROSITE" id="PS00668">
    <property type="entry name" value="COMPLEX1_ND1_2"/>
    <property type="match status" value="1"/>
</dbReference>
<proteinExistence type="inferred from homology"/>